<gene>
    <name evidence="1" type="primary">cshA</name>
    <name type="ordered locus">SAB1965c</name>
</gene>
<comment type="function">
    <text evidence="1">DEAD-box RNA helicase possibly involved in RNA degradation. Unwinds dsRNA in both 5'- and 3'-directions, has RNA-dependent ATPase activity.</text>
</comment>
<comment type="catalytic activity">
    <reaction evidence="1">
        <text>ATP + H2O = ADP + phosphate + H(+)</text>
        <dbReference type="Rhea" id="RHEA:13065"/>
        <dbReference type="ChEBI" id="CHEBI:15377"/>
        <dbReference type="ChEBI" id="CHEBI:15378"/>
        <dbReference type="ChEBI" id="CHEBI:30616"/>
        <dbReference type="ChEBI" id="CHEBI:43474"/>
        <dbReference type="ChEBI" id="CHEBI:456216"/>
        <dbReference type="EC" id="3.6.4.13"/>
    </reaction>
</comment>
<comment type="subunit">
    <text evidence="1">Oligomerizes, may be a member of the RNA degradosome.</text>
</comment>
<comment type="subcellular location">
    <subcellularLocation>
        <location evidence="1">Cytoplasm</location>
    </subcellularLocation>
</comment>
<comment type="similarity">
    <text evidence="1">Belongs to the DEAD box helicase family. CshA subfamily.</text>
</comment>
<evidence type="ECO:0000255" key="1">
    <source>
        <dbReference type="HAMAP-Rule" id="MF_01493"/>
    </source>
</evidence>
<evidence type="ECO:0000256" key="2">
    <source>
        <dbReference type="SAM" id="MobiDB-lite"/>
    </source>
</evidence>
<keyword id="KW-0067">ATP-binding</keyword>
<keyword id="KW-0963">Cytoplasm</keyword>
<keyword id="KW-0347">Helicase</keyword>
<keyword id="KW-0378">Hydrolase</keyword>
<keyword id="KW-0547">Nucleotide-binding</keyword>
<keyword id="KW-0694">RNA-binding</keyword>
<keyword id="KW-0346">Stress response</keyword>
<proteinExistence type="inferred from homology"/>
<reference key="1">
    <citation type="journal article" date="2007" name="PLoS ONE">
        <title>Molecular correlates of host specialization in Staphylococcus aureus.</title>
        <authorList>
            <person name="Herron-Olson L."/>
            <person name="Fitzgerald J.R."/>
            <person name="Musser J.M."/>
            <person name="Kapur V."/>
        </authorList>
    </citation>
    <scope>NUCLEOTIDE SEQUENCE [LARGE SCALE GENOMIC DNA]</scope>
    <source>
        <strain>bovine RF122 / ET3-1</strain>
    </source>
</reference>
<accession>Q2YUH3</accession>
<feature type="chain" id="PRO_0000284818" description="DEAD-box ATP-dependent RNA helicase CshA">
    <location>
        <begin position="1"/>
        <end position="506"/>
    </location>
</feature>
<feature type="domain" description="Helicase ATP-binding" evidence="1">
    <location>
        <begin position="33"/>
        <end position="203"/>
    </location>
</feature>
<feature type="domain" description="Helicase C-terminal" evidence="1">
    <location>
        <begin position="214"/>
        <end position="375"/>
    </location>
</feature>
<feature type="region of interest" description="Disordered" evidence="2">
    <location>
        <begin position="436"/>
        <end position="506"/>
    </location>
</feature>
<feature type="short sequence motif" description="Q motif">
    <location>
        <begin position="2"/>
        <end position="30"/>
    </location>
</feature>
<feature type="short sequence motif" description="DEAD box">
    <location>
        <begin position="150"/>
        <end position="153"/>
    </location>
</feature>
<feature type="compositionally biased region" description="Basic residues" evidence="2">
    <location>
        <begin position="468"/>
        <end position="480"/>
    </location>
</feature>
<feature type="binding site" evidence="1">
    <location>
        <begin position="46"/>
        <end position="53"/>
    </location>
    <ligand>
        <name>ATP</name>
        <dbReference type="ChEBI" id="CHEBI:30616"/>
    </ligand>
</feature>
<dbReference type="EC" id="3.6.4.13" evidence="1"/>
<dbReference type="EMBL" id="AJ938182">
    <property type="protein sequence ID" value="CAI81654.1"/>
    <property type="molecule type" value="Genomic_DNA"/>
</dbReference>
<dbReference type="RefSeq" id="WP_001178945.1">
    <property type="nucleotide sequence ID" value="NC_007622.1"/>
</dbReference>
<dbReference type="SMR" id="Q2YUH3"/>
<dbReference type="KEGG" id="sab:SAB1965c"/>
<dbReference type="HOGENOM" id="CLU_003041_21_1_9"/>
<dbReference type="GO" id="GO:0005829">
    <property type="term" value="C:cytosol"/>
    <property type="evidence" value="ECO:0007669"/>
    <property type="project" value="TreeGrafter"/>
</dbReference>
<dbReference type="GO" id="GO:0005840">
    <property type="term" value="C:ribosome"/>
    <property type="evidence" value="ECO:0007669"/>
    <property type="project" value="TreeGrafter"/>
</dbReference>
<dbReference type="GO" id="GO:0005524">
    <property type="term" value="F:ATP binding"/>
    <property type="evidence" value="ECO:0007669"/>
    <property type="project" value="UniProtKB-UniRule"/>
</dbReference>
<dbReference type="GO" id="GO:0016887">
    <property type="term" value="F:ATP hydrolysis activity"/>
    <property type="evidence" value="ECO:0007669"/>
    <property type="project" value="RHEA"/>
</dbReference>
<dbReference type="GO" id="GO:0003724">
    <property type="term" value="F:RNA helicase activity"/>
    <property type="evidence" value="ECO:0007669"/>
    <property type="project" value="UniProtKB-UniRule"/>
</dbReference>
<dbReference type="GO" id="GO:0033592">
    <property type="term" value="F:RNA strand annealing activity"/>
    <property type="evidence" value="ECO:0007669"/>
    <property type="project" value="TreeGrafter"/>
</dbReference>
<dbReference type="GO" id="GO:0009409">
    <property type="term" value="P:response to cold"/>
    <property type="evidence" value="ECO:0007669"/>
    <property type="project" value="TreeGrafter"/>
</dbReference>
<dbReference type="GO" id="GO:0006401">
    <property type="term" value="P:RNA catabolic process"/>
    <property type="evidence" value="ECO:0007669"/>
    <property type="project" value="UniProtKB-UniRule"/>
</dbReference>
<dbReference type="CDD" id="cd00268">
    <property type="entry name" value="DEADc"/>
    <property type="match status" value="1"/>
</dbReference>
<dbReference type="CDD" id="cd18787">
    <property type="entry name" value="SF2_C_DEAD"/>
    <property type="match status" value="1"/>
</dbReference>
<dbReference type="FunFam" id="3.40.50.300:FF:000108">
    <property type="entry name" value="ATP-dependent RNA helicase RhlE"/>
    <property type="match status" value="1"/>
</dbReference>
<dbReference type="Gene3D" id="3.40.50.300">
    <property type="entry name" value="P-loop containing nucleotide triphosphate hydrolases"/>
    <property type="match status" value="2"/>
</dbReference>
<dbReference type="HAMAP" id="MF_01493">
    <property type="entry name" value="DEAD_helicase_CshA"/>
    <property type="match status" value="1"/>
</dbReference>
<dbReference type="InterPro" id="IPR011545">
    <property type="entry name" value="DEAD/DEAH_box_helicase_dom"/>
</dbReference>
<dbReference type="InterPro" id="IPR050547">
    <property type="entry name" value="DEAD_box_RNA_helicases"/>
</dbReference>
<dbReference type="InterPro" id="IPR030880">
    <property type="entry name" value="DEAD_helicase_CshA"/>
</dbReference>
<dbReference type="InterPro" id="IPR014001">
    <property type="entry name" value="Helicase_ATP-bd"/>
</dbReference>
<dbReference type="InterPro" id="IPR001650">
    <property type="entry name" value="Helicase_C-like"/>
</dbReference>
<dbReference type="InterPro" id="IPR027417">
    <property type="entry name" value="P-loop_NTPase"/>
</dbReference>
<dbReference type="InterPro" id="IPR000629">
    <property type="entry name" value="RNA-helicase_DEAD-box_CS"/>
</dbReference>
<dbReference type="InterPro" id="IPR014014">
    <property type="entry name" value="RNA_helicase_DEAD_Q_motif"/>
</dbReference>
<dbReference type="PANTHER" id="PTHR47963">
    <property type="entry name" value="DEAD-BOX ATP-DEPENDENT RNA HELICASE 47, MITOCHONDRIAL"/>
    <property type="match status" value="1"/>
</dbReference>
<dbReference type="PANTHER" id="PTHR47963:SF5">
    <property type="entry name" value="DEAD-BOX ATP-DEPENDENT RNA HELICASE CSHA"/>
    <property type="match status" value="1"/>
</dbReference>
<dbReference type="Pfam" id="PF00270">
    <property type="entry name" value="DEAD"/>
    <property type="match status" value="1"/>
</dbReference>
<dbReference type="Pfam" id="PF00271">
    <property type="entry name" value="Helicase_C"/>
    <property type="match status" value="1"/>
</dbReference>
<dbReference type="SMART" id="SM00487">
    <property type="entry name" value="DEXDc"/>
    <property type="match status" value="1"/>
</dbReference>
<dbReference type="SMART" id="SM00490">
    <property type="entry name" value="HELICc"/>
    <property type="match status" value="1"/>
</dbReference>
<dbReference type="SUPFAM" id="SSF52540">
    <property type="entry name" value="P-loop containing nucleoside triphosphate hydrolases"/>
    <property type="match status" value="1"/>
</dbReference>
<dbReference type="PROSITE" id="PS00039">
    <property type="entry name" value="DEAD_ATP_HELICASE"/>
    <property type="match status" value="1"/>
</dbReference>
<dbReference type="PROSITE" id="PS51192">
    <property type="entry name" value="HELICASE_ATP_BIND_1"/>
    <property type="match status" value="1"/>
</dbReference>
<dbReference type="PROSITE" id="PS51194">
    <property type="entry name" value="HELICASE_CTER"/>
    <property type="match status" value="1"/>
</dbReference>
<dbReference type="PROSITE" id="PS51195">
    <property type="entry name" value="Q_MOTIF"/>
    <property type="match status" value="1"/>
</dbReference>
<organism>
    <name type="scientific">Staphylococcus aureus (strain bovine RF122 / ET3-1)</name>
    <dbReference type="NCBI Taxonomy" id="273036"/>
    <lineage>
        <taxon>Bacteria</taxon>
        <taxon>Bacillati</taxon>
        <taxon>Bacillota</taxon>
        <taxon>Bacilli</taxon>
        <taxon>Bacillales</taxon>
        <taxon>Staphylococcaceae</taxon>
        <taxon>Staphylococcus</taxon>
    </lineage>
</organism>
<protein>
    <recommendedName>
        <fullName evidence="1">DEAD-box ATP-dependent RNA helicase CshA</fullName>
        <ecNumber evidence="1">3.6.4.13</ecNumber>
    </recommendedName>
</protein>
<name>CSHA_STAAB</name>
<sequence>MQNFKELGISDNTVQSLESMGFKEPTPIQKDSIPYALQGIDILGQAQTGTGKTGAFGIPLIEKVVWKQGVQSLILAPTRELAMQVAEQLREFSRGQGVQVVTVFGGMPIERQIKALKKGPQIVVGTPGRVIDHLNRRTLKTDGIHTLILDEADEMMNMGFIDDMRFIMDKIPAVQRQTMLFSATMPKAIQALVQQFMKSPKIIKTMNNEMSDPQIEEFYTIVKELEKFDTFTNFLDVHQPELAIVFGRTKRRVDELTSALISKGYKAEGLHGDITQAKRLEVLKKFKNDQINILVATDVAARGLDISGVSHVYNFDIPQDTESYTHRIGRTGRAGKEGIAVTFVNPIEMDYIRQIEDANGRKMSALRPPHRKEVLQAREDDIKEKVENWMSKESESRLKRISTELLNEYNDVDLVAALLQELVEANDEVEVQLTFEKPLSRKGRNGKPSGSRNRNSKRGNPKFDSKSKRSKGYSSKKKSTKKFDRKEKSSGGSRPMKGRTFADHQK</sequence>